<accession>Q9VA12</accession>
<accession>B3DN24</accession>
<accession>Q8IS89</accession>
<sequence>MARFFDSRTTIFSPEGRLYQVEYAMEAASQSGTCVGLLAKNGVLLATERSVDKLMDTSIPVPRISWLNENIACCATGNTADGNVLVNQLRMIAQQYQFNFGEMIPCEQLVTNLCDIKQAYTQYGGKRPFGVSFLYMGWDCRFGFQLYQSDPSGNYSGWKATCIGRKSGAAMEMLQKELFSKGYVSPSVEEAKDVAIKVMGMTLGRDSLTPEKLEIAFVQRYGNTTVFHILEKNEIHRLIERNNNLKRRVGS</sequence>
<evidence type="ECO:0000250" key="1"/>
<evidence type="ECO:0000255" key="2">
    <source>
        <dbReference type="PROSITE-ProRule" id="PRU00808"/>
    </source>
</evidence>
<evidence type="ECO:0000269" key="3">
    <source>
    </source>
</evidence>
<evidence type="ECO:0000305" key="4"/>
<proteinExistence type="evidence at transcript level"/>
<gene>
    <name type="primary">Prosalpha3T</name>
    <name type="ORF">CG1736</name>
</gene>
<feature type="chain" id="PRO_0000124110" description="Proteasome subunit alpha type-4-like">
    <location>
        <begin position="1"/>
        <end position="251"/>
    </location>
</feature>
<feature type="sequence conflict" description="In Ref. 1; AAN63094." evidence="4" ref="1">
    <original>CA</original>
    <variation>WP</variation>
    <location>
        <begin position="74"/>
        <end position="75"/>
    </location>
</feature>
<feature type="sequence conflict" description="In Ref. 1; AAN63094." evidence="4" ref="1">
    <original>F</original>
    <variation>L</variation>
    <location>
        <position position="133"/>
    </location>
</feature>
<feature type="sequence conflict" description="In Ref. 1; AAN63094." evidence="4" ref="1">
    <original>RF</original>
    <variation>AS</variation>
    <location>
        <begin position="141"/>
        <end position="142"/>
    </location>
</feature>
<keyword id="KW-0539">Nucleus</keyword>
<keyword id="KW-0647">Proteasome</keyword>
<keyword id="KW-1185">Reference proteome</keyword>
<name>PSA4L_DROME</name>
<dbReference type="EMBL" id="AE014297">
    <property type="protein sequence ID" value="AAF57116.1"/>
    <property type="molecule type" value="Genomic_DNA"/>
</dbReference>
<dbReference type="EMBL" id="AY147240">
    <property type="protein sequence ID" value="AAN63094.1"/>
    <property type="molecule type" value="Genomic_DNA"/>
</dbReference>
<dbReference type="EMBL" id="BT032812">
    <property type="protein sequence ID" value="ACD81826.1"/>
    <property type="status" value="ALT_INIT"/>
    <property type="molecule type" value="mRNA"/>
</dbReference>
<dbReference type="RefSeq" id="NP_651843.1">
    <property type="nucleotide sequence ID" value="NM_143586.3"/>
</dbReference>
<dbReference type="SMR" id="Q9VA12"/>
<dbReference type="BioGRID" id="68527">
    <property type="interactions" value="1"/>
</dbReference>
<dbReference type="ComplexPortal" id="CPX-9087">
    <property type="entry name" value="26S proteasome complex, testis-specific variant"/>
</dbReference>
<dbReference type="FunCoup" id="Q9VA12">
    <property type="interactions" value="89"/>
</dbReference>
<dbReference type="STRING" id="7227.FBpp0085100"/>
<dbReference type="PaxDb" id="7227-FBpp0085100"/>
<dbReference type="DNASU" id="43679"/>
<dbReference type="EnsemblMetazoa" id="FBtr0085738">
    <property type="protein sequence ID" value="FBpp0085100"/>
    <property type="gene ID" value="FBgn0261395"/>
</dbReference>
<dbReference type="GeneID" id="43679"/>
<dbReference type="KEGG" id="dme:Dmel_CG1736"/>
<dbReference type="UCSC" id="CG1736-RA">
    <property type="organism name" value="d. melanogaster"/>
</dbReference>
<dbReference type="AGR" id="FB:FBgn0261395"/>
<dbReference type="CTD" id="43679"/>
<dbReference type="FlyBase" id="FBgn0261395">
    <property type="gene designation" value="Prosalpha3T"/>
</dbReference>
<dbReference type="VEuPathDB" id="VectorBase:FBgn0261395"/>
<dbReference type="eggNOG" id="KOG0178">
    <property type="taxonomic scope" value="Eukaryota"/>
</dbReference>
<dbReference type="GeneTree" id="ENSGT00550000074827"/>
<dbReference type="HOGENOM" id="CLU_035750_4_3_1"/>
<dbReference type="InParanoid" id="Q9VA12"/>
<dbReference type="OMA" id="FLYMGWD"/>
<dbReference type="OrthoDB" id="431557at2759"/>
<dbReference type="PhylomeDB" id="Q9VA12"/>
<dbReference type="BioGRID-ORCS" id="43679">
    <property type="hits" value="0 hits in 1 CRISPR screen"/>
</dbReference>
<dbReference type="GenomeRNAi" id="43679"/>
<dbReference type="PRO" id="PR:Q9VA12"/>
<dbReference type="Proteomes" id="UP000000803">
    <property type="component" value="Chromosome 3R"/>
</dbReference>
<dbReference type="Bgee" id="FBgn0261395">
    <property type="expression patterns" value="Expressed in outer photoreceptor cell (Drosophila) in insect head and 15 other cell types or tissues"/>
</dbReference>
<dbReference type="GO" id="GO:0005829">
    <property type="term" value="C:cytosol"/>
    <property type="evidence" value="ECO:0000318"/>
    <property type="project" value="GO_Central"/>
</dbReference>
<dbReference type="GO" id="GO:0001673">
    <property type="term" value="C:male germ cell nucleus"/>
    <property type="evidence" value="ECO:0000314"/>
    <property type="project" value="FlyBase"/>
</dbReference>
<dbReference type="GO" id="GO:0005634">
    <property type="term" value="C:nucleus"/>
    <property type="evidence" value="ECO:0000318"/>
    <property type="project" value="GO_Central"/>
</dbReference>
<dbReference type="GO" id="GO:0019773">
    <property type="term" value="C:proteasome core complex, alpha-subunit complex"/>
    <property type="evidence" value="ECO:0000250"/>
    <property type="project" value="UniProtKB"/>
</dbReference>
<dbReference type="GO" id="GO:0043161">
    <property type="term" value="P:proteasome-mediated ubiquitin-dependent protein catabolic process"/>
    <property type="evidence" value="ECO:0000250"/>
    <property type="project" value="FlyBase"/>
</dbReference>
<dbReference type="FunFam" id="3.60.20.10:FF:000031">
    <property type="entry name" value="Proteasome subunit alpha type"/>
    <property type="match status" value="1"/>
</dbReference>
<dbReference type="Gene3D" id="3.60.20.10">
    <property type="entry name" value="Glutamine Phosphoribosylpyrophosphate, subunit 1, domain 1"/>
    <property type="match status" value="1"/>
</dbReference>
<dbReference type="InterPro" id="IPR029055">
    <property type="entry name" value="Ntn_hydrolases_N"/>
</dbReference>
<dbReference type="InterPro" id="IPR050115">
    <property type="entry name" value="Proteasome_alpha"/>
</dbReference>
<dbReference type="InterPro" id="IPR023332">
    <property type="entry name" value="Proteasome_alpha-type"/>
</dbReference>
<dbReference type="InterPro" id="IPR000426">
    <property type="entry name" value="Proteasome_asu_N"/>
</dbReference>
<dbReference type="InterPro" id="IPR001353">
    <property type="entry name" value="Proteasome_sua/b"/>
</dbReference>
<dbReference type="PANTHER" id="PTHR11599">
    <property type="entry name" value="PROTEASOME SUBUNIT ALPHA/BETA"/>
    <property type="match status" value="1"/>
</dbReference>
<dbReference type="Pfam" id="PF00227">
    <property type="entry name" value="Proteasome"/>
    <property type="match status" value="1"/>
</dbReference>
<dbReference type="Pfam" id="PF10584">
    <property type="entry name" value="Proteasome_A_N"/>
    <property type="match status" value="1"/>
</dbReference>
<dbReference type="SMART" id="SM00948">
    <property type="entry name" value="Proteasome_A_N"/>
    <property type="match status" value="1"/>
</dbReference>
<dbReference type="SUPFAM" id="SSF56235">
    <property type="entry name" value="N-terminal nucleophile aminohydrolases (Ntn hydrolases)"/>
    <property type="match status" value="1"/>
</dbReference>
<dbReference type="PROSITE" id="PS00388">
    <property type="entry name" value="PROTEASOME_ALPHA_1"/>
    <property type="match status" value="1"/>
</dbReference>
<dbReference type="PROSITE" id="PS51475">
    <property type="entry name" value="PROTEASOME_ALPHA_2"/>
    <property type="match status" value="1"/>
</dbReference>
<protein>
    <recommendedName>
        <fullName>Proteasome subunit alpha type-4-like</fullName>
    </recommendedName>
</protein>
<organism>
    <name type="scientific">Drosophila melanogaster</name>
    <name type="common">Fruit fly</name>
    <dbReference type="NCBI Taxonomy" id="7227"/>
    <lineage>
        <taxon>Eukaryota</taxon>
        <taxon>Metazoa</taxon>
        <taxon>Ecdysozoa</taxon>
        <taxon>Arthropoda</taxon>
        <taxon>Hexapoda</taxon>
        <taxon>Insecta</taxon>
        <taxon>Pterygota</taxon>
        <taxon>Neoptera</taxon>
        <taxon>Endopterygota</taxon>
        <taxon>Diptera</taxon>
        <taxon>Brachycera</taxon>
        <taxon>Muscomorpha</taxon>
        <taxon>Ephydroidea</taxon>
        <taxon>Drosophilidae</taxon>
        <taxon>Drosophila</taxon>
        <taxon>Sophophora</taxon>
    </lineage>
</organism>
<comment type="function">
    <text>The proteasome is a multicatalytic proteinase complex which is characterized by its ability to cleave peptides with Arg, Phe, Tyr, Leu, and Glu adjacent to the leaving group at neutral or slightly basic pH. The proteasome has an ATP-dependent proteolytic activity.</text>
</comment>
<comment type="subunit">
    <text evidence="1">The 26S proteasome consists of a 20S proteasome core and two 19S regulatory subunits. The 20S proteasome core is composed of 28 subunits that are arranged in four stacked rings, resulting in a barrel-shaped structure. The two end rings are each formed by seven alpha subunits, and the two central rings are each formed by seven beta subunits. The catalytic chamber with the active sites is on the inside of the barrel (By similarity).</text>
</comment>
<comment type="subcellular location">
    <subcellularLocation>
        <location evidence="3">Nucleus</location>
    </subcellularLocation>
</comment>
<comment type="tissue specificity">
    <text evidence="3">Testis, prominent after meiosis II. After meiosis, predominantly localized to the haploid spermatid nuclei of the 64-cell cysts, remaining during the elongation and condensation of the spermatid nuclei. In mature, motile sperm, expression is seen exclusively in the sperm head.</text>
</comment>
<comment type="similarity">
    <text evidence="2">Belongs to the peptidase T1A family.</text>
</comment>
<comment type="sequence caution" evidence="4">
    <conflict type="erroneous initiation">
        <sequence resource="EMBL-CDS" id="ACD81826"/>
    </conflict>
</comment>
<reference key="1">
    <citation type="journal article" date="2002" name="Insect Mol. Biol.">
        <title>Expression of proteasome subunit isoforms during spermatogenesis in Drosophila melanogaster.</title>
        <authorList>
            <person name="Ma J."/>
            <person name="Katz E."/>
            <person name="Belote J.M."/>
        </authorList>
    </citation>
    <scope>NUCLEOTIDE SEQUENCE [GENOMIC DNA]</scope>
    <scope>SUBCELLULAR LOCATION</scope>
    <scope>TISSUE SPECIFICITY</scope>
    <source>
        <tissue>Testis</tissue>
    </source>
</reference>
<reference key="2">
    <citation type="journal article" date="2000" name="Science">
        <title>The genome sequence of Drosophila melanogaster.</title>
        <authorList>
            <person name="Adams M.D."/>
            <person name="Celniker S.E."/>
            <person name="Holt R.A."/>
            <person name="Evans C.A."/>
            <person name="Gocayne J.D."/>
            <person name="Amanatides P.G."/>
            <person name="Scherer S.E."/>
            <person name="Li P.W."/>
            <person name="Hoskins R.A."/>
            <person name="Galle R.F."/>
            <person name="George R.A."/>
            <person name="Lewis S.E."/>
            <person name="Richards S."/>
            <person name="Ashburner M."/>
            <person name="Henderson S.N."/>
            <person name="Sutton G.G."/>
            <person name="Wortman J.R."/>
            <person name="Yandell M.D."/>
            <person name="Zhang Q."/>
            <person name="Chen L.X."/>
            <person name="Brandon R.C."/>
            <person name="Rogers Y.-H.C."/>
            <person name="Blazej R.G."/>
            <person name="Champe M."/>
            <person name="Pfeiffer B.D."/>
            <person name="Wan K.H."/>
            <person name="Doyle C."/>
            <person name="Baxter E.G."/>
            <person name="Helt G."/>
            <person name="Nelson C.R."/>
            <person name="Miklos G.L.G."/>
            <person name="Abril J.F."/>
            <person name="Agbayani A."/>
            <person name="An H.-J."/>
            <person name="Andrews-Pfannkoch C."/>
            <person name="Baldwin D."/>
            <person name="Ballew R.M."/>
            <person name="Basu A."/>
            <person name="Baxendale J."/>
            <person name="Bayraktaroglu L."/>
            <person name="Beasley E.M."/>
            <person name="Beeson K.Y."/>
            <person name="Benos P.V."/>
            <person name="Berman B.P."/>
            <person name="Bhandari D."/>
            <person name="Bolshakov S."/>
            <person name="Borkova D."/>
            <person name="Botchan M.R."/>
            <person name="Bouck J."/>
            <person name="Brokstein P."/>
            <person name="Brottier P."/>
            <person name="Burtis K.C."/>
            <person name="Busam D.A."/>
            <person name="Butler H."/>
            <person name="Cadieu E."/>
            <person name="Center A."/>
            <person name="Chandra I."/>
            <person name="Cherry J.M."/>
            <person name="Cawley S."/>
            <person name="Dahlke C."/>
            <person name="Davenport L.B."/>
            <person name="Davies P."/>
            <person name="de Pablos B."/>
            <person name="Delcher A."/>
            <person name="Deng Z."/>
            <person name="Mays A.D."/>
            <person name="Dew I."/>
            <person name="Dietz S.M."/>
            <person name="Dodson K."/>
            <person name="Doup L.E."/>
            <person name="Downes M."/>
            <person name="Dugan-Rocha S."/>
            <person name="Dunkov B.C."/>
            <person name="Dunn P."/>
            <person name="Durbin K.J."/>
            <person name="Evangelista C.C."/>
            <person name="Ferraz C."/>
            <person name="Ferriera S."/>
            <person name="Fleischmann W."/>
            <person name="Fosler C."/>
            <person name="Gabrielian A.E."/>
            <person name="Garg N.S."/>
            <person name="Gelbart W.M."/>
            <person name="Glasser K."/>
            <person name="Glodek A."/>
            <person name="Gong F."/>
            <person name="Gorrell J.H."/>
            <person name="Gu Z."/>
            <person name="Guan P."/>
            <person name="Harris M."/>
            <person name="Harris N.L."/>
            <person name="Harvey D.A."/>
            <person name="Heiman T.J."/>
            <person name="Hernandez J.R."/>
            <person name="Houck J."/>
            <person name="Hostin D."/>
            <person name="Houston K.A."/>
            <person name="Howland T.J."/>
            <person name="Wei M.-H."/>
            <person name="Ibegwam C."/>
            <person name="Jalali M."/>
            <person name="Kalush F."/>
            <person name="Karpen G.H."/>
            <person name="Ke Z."/>
            <person name="Kennison J.A."/>
            <person name="Ketchum K.A."/>
            <person name="Kimmel B.E."/>
            <person name="Kodira C.D."/>
            <person name="Kraft C.L."/>
            <person name="Kravitz S."/>
            <person name="Kulp D."/>
            <person name="Lai Z."/>
            <person name="Lasko P."/>
            <person name="Lei Y."/>
            <person name="Levitsky A.A."/>
            <person name="Li J.H."/>
            <person name="Li Z."/>
            <person name="Liang Y."/>
            <person name="Lin X."/>
            <person name="Liu X."/>
            <person name="Mattei B."/>
            <person name="McIntosh T.C."/>
            <person name="McLeod M.P."/>
            <person name="McPherson D."/>
            <person name="Merkulov G."/>
            <person name="Milshina N.V."/>
            <person name="Mobarry C."/>
            <person name="Morris J."/>
            <person name="Moshrefi A."/>
            <person name="Mount S.M."/>
            <person name="Moy M."/>
            <person name="Murphy B."/>
            <person name="Murphy L."/>
            <person name="Muzny D.M."/>
            <person name="Nelson D.L."/>
            <person name="Nelson D.R."/>
            <person name="Nelson K.A."/>
            <person name="Nixon K."/>
            <person name="Nusskern D.R."/>
            <person name="Pacleb J.M."/>
            <person name="Palazzolo M."/>
            <person name="Pittman G.S."/>
            <person name="Pan S."/>
            <person name="Pollard J."/>
            <person name="Puri V."/>
            <person name="Reese M.G."/>
            <person name="Reinert K."/>
            <person name="Remington K."/>
            <person name="Saunders R.D.C."/>
            <person name="Scheeler F."/>
            <person name="Shen H."/>
            <person name="Shue B.C."/>
            <person name="Siden-Kiamos I."/>
            <person name="Simpson M."/>
            <person name="Skupski M.P."/>
            <person name="Smith T.J."/>
            <person name="Spier E."/>
            <person name="Spradling A.C."/>
            <person name="Stapleton M."/>
            <person name="Strong R."/>
            <person name="Sun E."/>
            <person name="Svirskas R."/>
            <person name="Tector C."/>
            <person name="Turner R."/>
            <person name="Venter E."/>
            <person name="Wang A.H."/>
            <person name="Wang X."/>
            <person name="Wang Z.-Y."/>
            <person name="Wassarman D.A."/>
            <person name="Weinstock G.M."/>
            <person name="Weissenbach J."/>
            <person name="Williams S.M."/>
            <person name="Woodage T."/>
            <person name="Worley K.C."/>
            <person name="Wu D."/>
            <person name="Yang S."/>
            <person name="Yao Q.A."/>
            <person name="Ye J."/>
            <person name="Yeh R.-F."/>
            <person name="Zaveri J.S."/>
            <person name="Zhan M."/>
            <person name="Zhang G."/>
            <person name="Zhao Q."/>
            <person name="Zheng L."/>
            <person name="Zheng X.H."/>
            <person name="Zhong F.N."/>
            <person name="Zhong W."/>
            <person name="Zhou X."/>
            <person name="Zhu S.C."/>
            <person name="Zhu X."/>
            <person name="Smith H.O."/>
            <person name="Gibbs R.A."/>
            <person name="Myers E.W."/>
            <person name="Rubin G.M."/>
            <person name="Venter J.C."/>
        </authorList>
    </citation>
    <scope>NUCLEOTIDE SEQUENCE [LARGE SCALE GENOMIC DNA]</scope>
    <source>
        <strain>Berkeley</strain>
    </source>
</reference>
<reference key="3">
    <citation type="journal article" date="2002" name="Genome Biol.">
        <title>Annotation of the Drosophila melanogaster euchromatic genome: a systematic review.</title>
        <authorList>
            <person name="Misra S."/>
            <person name="Crosby M.A."/>
            <person name="Mungall C.J."/>
            <person name="Matthews B.B."/>
            <person name="Campbell K.S."/>
            <person name="Hradecky P."/>
            <person name="Huang Y."/>
            <person name="Kaminker J.S."/>
            <person name="Millburn G.H."/>
            <person name="Prochnik S.E."/>
            <person name="Smith C.D."/>
            <person name="Tupy J.L."/>
            <person name="Whitfield E.J."/>
            <person name="Bayraktaroglu L."/>
            <person name="Berman B.P."/>
            <person name="Bettencourt B.R."/>
            <person name="Celniker S.E."/>
            <person name="de Grey A.D.N.J."/>
            <person name="Drysdale R.A."/>
            <person name="Harris N.L."/>
            <person name="Richter J."/>
            <person name="Russo S."/>
            <person name="Schroeder A.J."/>
            <person name="Shu S.Q."/>
            <person name="Stapleton M."/>
            <person name="Yamada C."/>
            <person name="Ashburner M."/>
            <person name="Gelbart W.M."/>
            <person name="Rubin G.M."/>
            <person name="Lewis S.E."/>
        </authorList>
    </citation>
    <scope>GENOME REANNOTATION</scope>
    <source>
        <strain>Berkeley</strain>
    </source>
</reference>
<reference key="4">
    <citation type="submission" date="2008-05" db="EMBL/GenBank/DDBJ databases">
        <authorList>
            <person name="Carlson J.W."/>
            <person name="Booth B."/>
            <person name="Frise E."/>
            <person name="Park S."/>
            <person name="Wan K.H."/>
            <person name="Yu C."/>
            <person name="Celniker S.E."/>
        </authorList>
    </citation>
    <scope>NUCLEOTIDE SEQUENCE [LARGE SCALE MRNA]</scope>
    <source>
        <strain>Berkeley</strain>
    </source>
</reference>